<proteinExistence type="inferred from homology"/>
<name>CH60_NEIM0</name>
<accession>A9M0Q6</accession>
<comment type="function">
    <text evidence="1">Together with its co-chaperonin GroES, plays an essential role in assisting protein folding. The GroEL-GroES system forms a nano-cage that allows encapsulation of the non-native substrate proteins and provides a physical environment optimized to promote and accelerate protein folding.</text>
</comment>
<comment type="catalytic activity">
    <reaction evidence="1">
        <text>ATP + H2O + a folded polypeptide = ADP + phosphate + an unfolded polypeptide.</text>
        <dbReference type="EC" id="5.6.1.7"/>
    </reaction>
</comment>
<comment type="subunit">
    <text evidence="1">Forms a cylinder of 14 subunits composed of two heptameric rings stacked back-to-back. Interacts with the co-chaperonin GroES.</text>
</comment>
<comment type="subcellular location">
    <subcellularLocation>
        <location evidence="1">Cytoplasm</location>
    </subcellularLocation>
</comment>
<comment type="similarity">
    <text evidence="1">Belongs to the chaperonin (HSP60) family.</text>
</comment>
<keyword id="KW-0067">ATP-binding</keyword>
<keyword id="KW-0143">Chaperone</keyword>
<keyword id="KW-0963">Cytoplasm</keyword>
<keyword id="KW-0413">Isomerase</keyword>
<keyword id="KW-0547">Nucleotide-binding</keyword>
<sequence length="544" mass="57437">MAAKDVQFGNEVRQKMVNGVNILANAVRVTLGPKGRNVVVDRAFGGPHITKDGVTVAKEIELKDKFENMGAQMVKEVASKTNDVAGDGTTTATVLAQSIVAEGMKYVTAGMNPTDLKRGIDKAVAALVEELKNIAKPCDTSKEIAQVGSISANSDEQVGAIIAEAMEKVGKEGVITVEDGKSLENELDVVEGMQFDRGYLSPYFINDAEKQIAALDNPFVLLFDKKISNIRDLLPVLEQVAKASRPLLIIAEDVEGEALATLVVNNIRGILKTVAVKAPGFGDRRKAMLQDIAILTGGVVISEEVGLSLEKATLDDLGQAKRIEIGKENTTIIDGFGDAAQIEARVAEIRQQIETATSDYDKEKLQERVAKLAGGVAVIKVGAATEVEMKEKKDRVEDALHATRAAVEEGVVAGGGVALLRARAALENLHTGNADQDAGVQIVLRAVESPLRQIVANAGGEPSVVVNKVLEGKGNYGYNAGSGEYGDMIEMGVLDPAKVTRSALQHAASIAGLMLTTDCMIAEIPEDKPAVPDMGGMGGMGGMM</sequence>
<dbReference type="EC" id="5.6.1.7" evidence="1"/>
<dbReference type="EMBL" id="CP000381">
    <property type="protein sequence ID" value="ABX72449.1"/>
    <property type="molecule type" value="Genomic_DNA"/>
</dbReference>
<dbReference type="RefSeq" id="WP_002248549.1">
    <property type="nucleotide sequence ID" value="NC_010120.1"/>
</dbReference>
<dbReference type="SMR" id="A9M0Q6"/>
<dbReference type="KEGG" id="nmn:NMCC_0241"/>
<dbReference type="HOGENOM" id="CLU_016503_3_0_4"/>
<dbReference type="Proteomes" id="UP000001177">
    <property type="component" value="Chromosome"/>
</dbReference>
<dbReference type="GO" id="GO:0005737">
    <property type="term" value="C:cytoplasm"/>
    <property type="evidence" value="ECO:0007669"/>
    <property type="project" value="UniProtKB-SubCell"/>
</dbReference>
<dbReference type="GO" id="GO:0005524">
    <property type="term" value="F:ATP binding"/>
    <property type="evidence" value="ECO:0007669"/>
    <property type="project" value="UniProtKB-UniRule"/>
</dbReference>
<dbReference type="GO" id="GO:0140662">
    <property type="term" value="F:ATP-dependent protein folding chaperone"/>
    <property type="evidence" value="ECO:0007669"/>
    <property type="project" value="InterPro"/>
</dbReference>
<dbReference type="GO" id="GO:0016853">
    <property type="term" value="F:isomerase activity"/>
    <property type="evidence" value="ECO:0007669"/>
    <property type="project" value="UniProtKB-KW"/>
</dbReference>
<dbReference type="GO" id="GO:0051082">
    <property type="term" value="F:unfolded protein binding"/>
    <property type="evidence" value="ECO:0007669"/>
    <property type="project" value="UniProtKB-UniRule"/>
</dbReference>
<dbReference type="GO" id="GO:0042026">
    <property type="term" value="P:protein refolding"/>
    <property type="evidence" value="ECO:0007669"/>
    <property type="project" value="UniProtKB-UniRule"/>
</dbReference>
<dbReference type="CDD" id="cd03344">
    <property type="entry name" value="GroEL"/>
    <property type="match status" value="1"/>
</dbReference>
<dbReference type="FunFam" id="1.10.560.10:FF:000001">
    <property type="entry name" value="60 kDa chaperonin"/>
    <property type="match status" value="1"/>
</dbReference>
<dbReference type="FunFam" id="3.50.7.10:FF:000001">
    <property type="entry name" value="60 kDa chaperonin"/>
    <property type="match status" value="1"/>
</dbReference>
<dbReference type="Gene3D" id="3.50.7.10">
    <property type="entry name" value="GroEL"/>
    <property type="match status" value="1"/>
</dbReference>
<dbReference type="Gene3D" id="1.10.560.10">
    <property type="entry name" value="GroEL-like equatorial domain"/>
    <property type="match status" value="1"/>
</dbReference>
<dbReference type="Gene3D" id="3.30.260.10">
    <property type="entry name" value="TCP-1-like chaperonin intermediate domain"/>
    <property type="match status" value="1"/>
</dbReference>
<dbReference type="HAMAP" id="MF_00600">
    <property type="entry name" value="CH60"/>
    <property type="match status" value="1"/>
</dbReference>
<dbReference type="InterPro" id="IPR018370">
    <property type="entry name" value="Chaperonin_Cpn60_CS"/>
</dbReference>
<dbReference type="InterPro" id="IPR001844">
    <property type="entry name" value="Cpn60/GroEL"/>
</dbReference>
<dbReference type="InterPro" id="IPR002423">
    <property type="entry name" value="Cpn60/GroEL/TCP-1"/>
</dbReference>
<dbReference type="InterPro" id="IPR027409">
    <property type="entry name" value="GroEL-like_apical_dom_sf"/>
</dbReference>
<dbReference type="InterPro" id="IPR027413">
    <property type="entry name" value="GROEL-like_equatorial_sf"/>
</dbReference>
<dbReference type="InterPro" id="IPR027410">
    <property type="entry name" value="TCP-1-like_intermed_sf"/>
</dbReference>
<dbReference type="NCBIfam" id="TIGR02348">
    <property type="entry name" value="GroEL"/>
    <property type="match status" value="1"/>
</dbReference>
<dbReference type="NCBIfam" id="NF000592">
    <property type="entry name" value="PRK00013.1"/>
    <property type="match status" value="1"/>
</dbReference>
<dbReference type="NCBIfam" id="NF009487">
    <property type="entry name" value="PRK12849.1"/>
    <property type="match status" value="1"/>
</dbReference>
<dbReference type="NCBIfam" id="NF009488">
    <property type="entry name" value="PRK12850.1"/>
    <property type="match status" value="1"/>
</dbReference>
<dbReference type="NCBIfam" id="NF009489">
    <property type="entry name" value="PRK12851.1"/>
    <property type="match status" value="1"/>
</dbReference>
<dbReference type="PANTHER" id="PTHR45633">
    <property type="entry name" value="60 KDA HEAT SHOCK PROTEIN, MITOCHONDRIAL"/>
    <property type="match status" value="1"/>
</dbReference>
<dbReference type="Pfam" id="PF00118">
    <property type="entry name" value="Cpn60_TCP1"/>
    <property type="match status" value="1"/>
</dbReference>
<dbReference type="PRINTS" id="PR00298">
    <property type="entry name" value="CHAPERONIN60"/>
</dbReference>
<dbReference type="SUPFAM" id="SSF52029">
    <property type="entry name" value="GroEL apical domain-like"/>
    <property type="match status" value="1"/>
</dbReference>
<dbReference type="SUPFAM" id="SSF48592">
    <property type="entry name" value="GroEL equatorial domain-like"/>
    <property type="match status" value="1"/>
</dbReference>
<dbReference type="SUPFAM" id="SSF54849">
    <property type="entry name" value="GroEL-intermediate domain like"/>
    <property type="match status" value="1"/>
</dbReference>
<dbReference type="PROSITE" id="PS00296">
    <property type="entry name" value="CHAPERONINS_CPN60"/>
    <property type="match status" value="1"/>
</dbReference>
<reference key="1">
    <citation type="journal article" date="2008" name="Genomics">
        <title>Characterization of ST-4821 complex, a unique Neisseria meningitidis clone.</title>
        <authorList>
            <person name="Peng J."/>
            <person name="Yang L."/>
            <person name="Yang F."/>
            <person name="Yang J."/>
            <person name="Yan Y."/>
            <person name="Nie H."/>
            <person name="Zhang X."/>
            <person name="Xiong Z."/>
            <person name="Jiang Y."/>
            <person name="Cheng F."/>
            <person name="Xu X."/>
            <person name="Chen S."/>
            <person name="Sun L."/>
            <person name="Li W."/>
            <person name="Shen Y."/>
            <person name="Shao Z."/>
            <person name="Liang X."/>
            <person name="Xu J."/>
            <person name="Jin Q."/>
        </authorList>
    </citation>
    <scope>NUCLEOTIDE SEQUENCE [LARGE SCALE GENOMIC DNA]</scope>
    <source>
        <strain>053442</strain>
    </source>
</reference>
<organism>
    <name type="scientific">Neisseria meningitidis serogroup C (strain 053442)</name>
    <dbReference type="NCBI Taxonomy" id="374833"/>
    <lineage>
        <taxon>Bacteria</taxon>
        <taxon>Pseudomonadati</taxon>
        <taxon>Pseudomonadota</taxon>
        <taxon>Betaproteobacteria</taxon>
        <taxon>Neisseriales</taxon>
        <taxon>Neisseriaceae</taxon>
        <taxon>Neisseria</taxon>
    </lineage>
</organism>
<evidence type="ECO:0000255" key="1">
    <source>
        <dbReference type="HAMAP-Rule" id="MF_00600"/>
    </source>
</evidence>
<gene>
    <name evidence="1" type="primary">groEL</name>
    <name evidence="1" type="synonym">groL</name>
    <name type="ordered locus">NMCC_0241</name>
</gene>
<feature type="chain" id="PRO_1000082479" description="Chaperonin GroEL">
    <location>
        <begin position="1"/>
        <end position="544"/>
    </location>
</feature>
<feature type="binding site" evidence="1">
    <location>
        <begin position="30"/>
        <end position="33"/>
    </location>
    <ligand>
        <name>ATP</name>
        <dbReference type="ChEBI" id="CHEBI:30616"/>
    </ligand>
</feature>
<feature type="binding site" evidence="1">
    <location>
        <position position="51"/>
    </location>
    <ligand>
        <name>ATP</name>
        <dbReference type="ChEBI" id="CHEBI:30616"/>
    </ligand>
</feature>
<feature type="binding site" evidence="1">
    <location>
        <begin position="87"/>
        <end position="91"/>
    </location>
    <ligand>
        <name>ATP</name>
        <dbReference type="ChEBI" id="CHEBI:30616"/>
    </ligand>
</feature>
<feature type="binding site" evidence="1">
    <location>
        <position position="415"/>
    </location>
    <ligand>
        <name>ATP</name>
        <dbReference type="ChEBI" id="CHEBI:30616"/>
    </ligand>
</feature>
<feature type="binding site" evidence="1">
    <location>
        <position position="495"/>
    </location>
    <ligand>
        <name>ATP</name>
        <dbReference type="ChEBI" id="CHEBI:30616"/>
    </ligand>
</feature>
<protein>
    <recommendedName>
        <fullName evidence="1">Chaperonin GroEL</fullName>
        <ecNumber evidence="1">5.6.1.7</ecNumber>
    </recommendedName>
    <alternativeName>
        <fullName evidence="1">60 kDa chaperonin</fullName>
    </alternativeName>
    <alternativeName>
        <fullName evidence="1">Chaperonin-60</fullName>
        <shortName evidence="1">Cpn60</shortName>
    </alternativeName>
</protein>